<name>YC9D_SCHPO</name>
<gene>
    <name type="ORF">SPCC584.13</name>
</gene>
<keyword id="KW-0029">Amino-acid transport</keyword>
<keyword id="KW-0472">Membrane</keyword>
<keyword id="KW-1185">Reference proteome</keyword>
<keyword id="KW-0812">Transmembrane</keyword>
<keyword id="KW-1133">Transmembrane helix</keyword>
<keyword id="KW-0813">Transport</keyword>
<sequence>MSIFKKSSNTAPSQHEDVEALASDEADLAALGYKQEFKREFSAWTSFCVSFSVLGLLPSFASTMYYTTGYAGTPAMVWGWLIAMVFVQCVANGMAELCSSMPTSGGLYYAAAVLAPKGWGPFAAWLTGWSNYLVQVTGPPSVAYSFAGMILTLVQLHNPNFETQNYQIFLLAVAAMIAQGFISSMPTKVLAVFNTWGTVLNMLFLAIVMITVLAVAGTKTPRGFNSNHKVWNEFDNQTDWSNGMAMLMSFAGVIWTMSGYDSPFHLSEECSNASVAAPRAIVMTSAFGGIVGWLLNLCIAYTIVDVNAAMNDDLGQPFVVYLRQVCNYKTTVALTSLTVICSFMMGQGCMVAASRVTYSYARDGVFPFSKYLAIVDKRTKTPNVCVWMNVVVGILCCLLIFAGEAAINAIFSVGAIAAFVAFTTPIFLRVFFVKEDEFKRGPWHLGKFSKINGYAACAFVLLMVPILCFPQFRGKDNTPDAMNWTCVVFGGPMLMVLIWWFVSARKWFKGPRLTIGVDDAVSEINVLEGVTKSDDDSISTLKKK</sequence>
<feature type="chain" id="PRO_0000054175" description="Uncharacterized amino-acid permease C584.13">
    <location>
        <begin position="1"/>
        <end position="544"/>
    </location>
</feature>
<feature type="transmembrane region" description="Helical" evidence="1">
    <location>
        <begin position="41"/>
        <end position="61"/>
    </location>
</feature>
<feature type="transmembrane region" description="Helical" evidence="1">
    <location>
        <begin position="71"/>
        <end position="91"/>
    </location>
</feature>
<feature type="transmembrane region" description="Helical" evidence="1">
    <location>
        <begin position="106"/>
        <end position="126"/>
    </location>
</feature>
<feature type="transmembrane region" description="Helical" evidence="1">
    <location>
        <begin position="166"/>
        <end position="186"/>
    </location>
</feature>
<feature type="transmembrane region" description="Helical" evidence="1">
    <location>
        <begin position="196"/>
        <end position="216"/>
    </location>
</feature>
<feature type="transmembrane region" description="Helical" evidence="1">
    <location>
        <begin position="240"/>
        <end position="260"/>
    </location>
</feature>
<feature type="transmembrane region" description="Helical" evidence="1">
    <location>
        <begin position="280"/>
        <end position="300"/>
    </location>
</feature>
<feature type="transmembrane region" description="Helical" evidence="1">
    <location>
        <begin position="332"/>
        <end position="352"/>
    </location>
</feature>
<feature type="transmembrane region" description="Helical" evidence="1">
    <location>
        <begin position="391"/>
        <end position="411"/>
    </location>
</feature>
<feature type="transmembrane region" description="Helical" evidence="1">
    <location>
        <begin position="413"/>
        <end position="433"/>
    </location>
</feature>
<feature type="transmembrane region" description="Helical" evidence="1">
    <location>
        <begin position="451"/>
        <end position="471"/>
    </location>
</feature>
<feature type="transmembrane region" description="Helical" evidence="1">
    <location>
        <begin position="484"/>
        <end position="504"/>
    </location>
</feature>
<protein>
    <recommendedName>
        <fullName>Uncharacterized amino-acid permease C584.13</fullName>
    </recommendedName>
</protein>
<accession>Q09887</accession>
<dbReference type="EMBL" id="CU329672">
    <property type="protein sequence ID" value="CAB37426.1"/>
    <property type="molecule type" value="Genomic_DNA"/>
</dbReference>
<dbReference type="PIR" id="T41435">
    <property type="entry name" value="S62527"/>
</dbReference>
<dbReference type="RefSeq" id="NP_588218.1">
    <property type="nucleotide sequence ID" value="NM_001023208.2"/>
</dbReference>
<dbReference type="SMR" id="Q09887"/>
<dbReference type="BioGRID" id="275667">
    <property type="interactions" value="4"/>
</dbReference>
<dbReference type="iPTMnet" id="Q09887"/>
<dbReference type="PaxDb" id="4896-SPCC584.13.1"/>
<dbReference type="EnsemblFungi" id="SPCC584.13.1">
    <property type="protein sequence ID" value="SPCC584.13.1:pep"/>
    <property type="gene ID" value="SPCC584.13"/>
</dbReference>
<dbReference type="KEGG" id="spo:2539095"/>
<dbReference type="PomBase" id="SPCC584.13"/>
<dbReference type="VEuPathDB" id="FungiDB:SPCC584.13"/>
<dbReference type="eggNOG" id="KOG1289">
    <property type="taxonomic scope" value="Eukaryota"/>
</dbReference>
<dbReference type="HOGENOM" id="CLU_004495_0_3_1"/>
<dbReference type="InParanoid" id="Q09887"/>
<dbReference type="OMA" id="AFFWTWP"/>
<dbReference type="PhylomeDB" id="Q09887"/>
<dbReference type="PRO" id="PR:Q09887"/>
<dbReference type="Proteomes" id="UP000002485">
    <property type="component" value="Chromosome III"/>
</dbReference>
<dbReference type="GO" id="GO:0000324">
    <property type="term" value="C:fungal-type vacuole"/>
    <property type="evidence" value="ECO:0007005"/>
    <property type="project" value="PomBase"/>
</dbReference>
<dbReference type="GO" id="GO:0016020">
    <property type="term" value="C:membrane"/>
    <property type="evidence" value="ECO:0007669"/>
    <property type="project" value="UniProtKB-SubCell"/>
</dbReference>
<dbReference type="GO" id="GO:0015171">
    <property type="term" value="F:amino acid transmembrane transporter activity"/>
    <property type="evidence" value="ECO:0000255"/>
    <property type="project" value="PomBase"/>
</dbReference>
<dbReference type="GO" id="GO:0015185">
    <property type="term" value="F:gamma-aminobutyric acid transmembrane transporter activity"/>
    <property type="evidence" value="ECO:0000318"/>
    <property type="project" value="GO_Central"/>
</dbReference>
<dbReference type="GO" id="GO:0003333">
    <property type="term" value="P:amino acid transmembrane transport"/>
    <property type="evidence" value="ECO:0000255"/>
    <property type="project" value="PomBase"/>
</dbReference>
<dbReference type="GO" id="GO:0015812">
    <property type="term" value="P:gamma-aminobutyric acid transport"/>
    <property type="evidence" value="ECO:0000318"/>
    <property type="project" value="GO_Central"/>
</dbReference>
<dbReference type="FunFam" id="1.20.1740.10:FF:000046">
    <property type="entry name" value="Amino-acid permease, putative"/>
    <property type="match status" value="1"/>
</dbReference>
<dbReference type="Gene3D" id="1.20.1740.10">
    <property type="entry name" value="Amino acid/polyamine transporter I"/>
    <property type="match status" value="1"/>
</dbReference>
<dbReference type="InterPro" id="IPR002293">
    <property type="entry name" value="AA/rel_permease1"/>
</dbReference>
<dbReference type="PANTHER" id="PTHR45649:SF29">
    <property type="entry name" value="AMINO ACID TRANSPORTER (EUROFUNG)"/>
    <property type="match status" value="1"/>
</dbReference>
<dbReference type="PANTHER" id="PTHR45649">
    <property type="entry name" value="AMINO-ACID PERMEASE BAT1"/>
    <property type="match status" value="1"/>
</dbReference>
<dbReference type="Pfam" id="PF13520">
    <property type="entry name" value="AA_permease_2"/>
    <property type="match status" value="1"/>
</dbReference>
<dbReference type="PIRSF" id="PIRSF006060">
    <property type="entry name" value="AA_transporter"/>
    <property type="match status" value="1"/>
</dbReference>
<organism>
    <name type="scientific">Schizosaccharomyces pombe (strain 972 / ATCC 24843)</name>
    <name type="common">Fission yeast</name>
    <dbReference type="NCBI Taxonomy" id="284812"/>
    <lineage>
        <taxon>Eukaryota</taxon>
        <taxon>Fungi</taxon>
        <taxon>Dikarya</taxon>
        <taxon>Ascomycota</taxon>
        <taxon>Taphrinomycotina</taxon>
        <taxon>Schizosaccharomycetes</taxon>
        <taxon>Schizosaccharomycetales</taxon>
        <taxon>Schizosaccharomycetaceae</taxon>
        <taxon>Schizosaccharomyces</taxon>
    </lineage>
</organism>
<comment type="subcellular location">
    <subcellularLocation>
        <location evidence="2">Membrane</location>
        <topology evidence="2">Multi-pass membrane protein</topology>
    </subcellularLocation>
</comment>
<comment type="similarity">
    <text evidence="2">Belongs to the amino acid-polyamine-organocation (APC) superfamily.</text>
</comment>
<proteinExistence type="inferred from homology"/>
<evidence type="ECO:0000255" key="1"/>
<evidence type="ECO:0000305" key="2"/>
<reference key="1">
    <citation type="journal article" date="2002" name="Nature">
        <title>The genome sequence of Schizosaccharomyces pombe.</title>
        <authorList>
            <person name="Wood V."/>
            <person name="Gwilliam R."/>
            <person name="Rajandream M.A."/>
            <person name="Lyne M.H."/>
            <person name="Lyne R."/>
            <person name="Stewart A."/>
            <person name="Sgouros J.G."/>
            <person name="Peat N."/>
            <person name="Hayles J."/>
            <person name="Baker S.G."/>
            <person name="Basham D."/>
            <person name="Bowman S."/>
            <person name="Brooks K."/>
            <person name="Brown D."/>
            <person name="Brown S."/>
            <person name="Chillingworth T."/>
            <person name="Churcher C.M."/>
            <person name="Collins M."/>
            <person name="Connor R."/>
            <person name="Cronin A."/>
            <person name="Davis P."/>
            <person name="Feltwell T."/>
            <person name="Fraser A."/>
            <person name="Gentles S."/>
            <person name="Goble A."/>
            <person name="Hamlin N."/>
            <person name="Harris D.E."/>
            <person name="Hidalgo J."/>
            <person name="Hodgson G."/>
            <person name="Holroyd S."/>
            <person name="Hornsby T."/>
            <person name="Howarth S."/>
            <person name="Huckle E.J."/>
            <person name="Hunt S."/>
            <person name="Jagels K."/>
            <person name="James K.D."/>
            <person name="Jones L."/>
            <person name="Jones M."/>
            <person name="Leather S."/>
            <person name="McDonald S."/>
            <person name="McLean J."/>
            <person name="Mooney P."/>
            <person name="Moule S."/>
            <person name="Mungall K.L."/>
            <person name="Murphy L.D."/>
            <person name="Niblett D."/>
            <person name="Odell C."/>
            <person name="Oliver K."/>
            <person name="O'Neil S."/>
            <person name="Pearson D."/>
            <person name="Quail M.A."/>
            <person name="Rabbinowitsch E."/>
            <person name="Rutherford K.M."/>
            <person name="Rutter S."/>
            <person name="Saunders D."/>
            <person name="Seeger K."/>
            <person name="Sharp S."/>
            <person name="Skelton J."/>
            <person name="Simmonds M.N."/>
            <person name="Squares R."/>
            <person name="Squares S."/>
            <person name="Stevens K."/>
            <person name="Taylor K."/>
            <person name="Taylor R.G."/>
            <person name="Tivey A."/>
            <person name="Walsh S.V."/>
            <person name="Warren T."/>
            <person name="Whitehead S."/>
            <person name="Woodward J.R."/>
            <person name="Volckaert G."/>
            <person name="Aert R."/>
            <person name="Robben J."/>
            <person name="Grymonprez B."/>
            <person name="Weltjens I."/>
            <person name="Vanstreels E."/>
            <person name="Rieger M."/>
            <person name="Schaefer M."/>
            <person name="Mueller-Auer S."/>
            <person name="Gabel C."/>
            <person name="Fuchs M."/>
            <person name="Duesterhoeft A."/>
            <person name="Fritzc C."/>
            <person name="Holzer E."/>
            <person name="Moestl D."/>
            <person name="Hilbert H."/>
            <person name="Borzym K."/>
            <person name="Langer I."/>
            <person name="Beck A."/>
            <person name="Lehrach H."/>
            <person name="Reinhardt R."/>
            <person name="Pohl T.M."/>
            <person name="Eger P."/>
            <person name="Zimmermann W."/>
            <person name="Wedler H."/>
            <person name="Wambutt R."/>
            <person name="Purnelle B."/>
            <person name="Goffeau A."/>
            <person name="Cadieu E."/>
            <person name="Dreano S."/>
            <person name="Gloux S."/>
            <person name="Lelaure V."/>
            <person name="Mottier S."/>
            <person name="Galibert F."/>
            <person name="Aves S.J."/>
            <person name="Xiang Z."/>
            <person name="Hunt C."/>
            <person name="Moore K."/>
            <person name="Hurst S.M."/>
            <person name="Lucas M."/>
            <person name="Rochet M."/>
            <person name="Gaillardin C."/>
            <person name="Tallada V.A."/>
            <person name="Garzon A."/>
            <person name="Thode G."/>
            <person name="Daga R.R."/>
            <person name="Cruzado L."/>
            <person name="Jimenez J."/>
            <person name="Sanchez M."/>
            <person name="del Rey F."/>
            <person name="Benito J."/>
            <person name="Dominguez A."/>
            <person name="Revuelta J.L."/>
            <person name="Moreno S."/>
            <person name="Armstrong J."/>
            <person name="Forsburg S.L."/>
            <person name="Cerutti L."/>
            <person name="Lowe T."/>
            <person name="McCombie W.R."/>
            <person name="Paulsen I."/>
            <person name="Potashkin J."/>
            <person name="Shpakovski G.V."/>
            <person name="Ussery D."/>
            <person name="Barrell B.G."/>
            <person name="Nurse P."/>
        </authorList>
    </citation>
    <scope>NUCLEOTIDE SEQUENCE [LARGE SCALE GENOMIC DNA]</scope>
    <source>
        <strain>972 / ATCC 24843</strain>
    </source>
</reference>